<protein>
    <recommendedName>
        <fullName evidence="1">NAD(P)H-quinone oxidoreductase subunit 2 A, chloroplastic</fullName>
        <ecNumber evidence="1">7.1.1.-</ecNumber>
    </recommendedName>
    <alternativeName>
        <fullName evidence="1">NAD(P)H dehydrogenase, subunit 2 A</fullName>
    </alternativeName>
    <alternativeName>
        <fullName evidence="1">NADH-plastoquinone oxidoreductase subunit 2 A</fullName>
    </alternativeName>
</protein>
<sequence>MIWHVQNENLILDSTRIFMKAFHLLLFDGSFIFPECILIFGLILLLMIDSTSDQKDISWFYFISSTSLVMSIVVLLFRWREEPMISFSGNFQTNNFNEIFQFLILLSSTLCIPLSVEYIECTEMAITEFLLFVLTATLGGMFLCSANDLITIFVAPECFSLCSYLLSGYTKKDVRSNEATMKYLLMGGASSSILVHGFSWLYGSSGGEIELQEIVNGLINTQMYNSPGISIALIFITVGIGFKLSLAPSHQWTPDVYEGSPTPVVAFLSVTSKVAASALATRIFDIPFYFSSNEWHLLLEILAILSMILGNLIAITQTSMKRMLAYSSIGQIGYVIIGIIVGDSNGGYASMITYMLFYISMNLGTFACIVSFGLRTGTDNIRDYAGLYTKDPFLALSLALCLLSLGGLPPLAGFFGKLYLFWCGWQAGLYFLVSIGLLMSVVSIYYYLKIIKLLMTGRNQEITPHVRNYKRSPLRSNNSIELSMIVCVIASTISGISMNPIIEIAQDTLF</sequence>
<dbReference type="EC" id="7.1.1.-" evidence="1"/>
<dbReference type="EMBL" id="AP002983">
    <property type="protein sequence ID" value="BAB33239.1"/>
    <property type="status" value="ALT_SEQ"/>
    <property type="molecule type" value="Genomic_DNA"/>
</dbReference>
<dbReference type="SMR" id="P0CC88"/>
<dbReference type="GO" id="GO:0009535">
    <property type="term" value="C:chloroplast thylakoid membrane"/>
    <property type="evidence" value="ECO:0007669"/>
    <property type="project" value="UniProtKB-SubCell"/>
</dbReference>
<dbReference type="GO" id="GO:0008137">
    <property type="term" value="F:NADH dehydrogenase (ubiquinone) activity"/>
    <property type="evidence" value="ECO:0007669"/>
    <property type="project" value="InterPro"/>
</dbReference>
<dbReference type="GO" id="GO:0048038">
    <property type="term" value="F:quinone binding"/>
    <property type="evidence" value="ECO:0007669"/>
    <property type="project" value="UniProtKB-KW"/>
</dbReference>
<dbReference type="GO" id="GO:0042773">
    <property type="term" value="P:ATP synthesis coupled electron transport"/>
    <property type="evidence" value="ECO:0007669"/>
    <property type="project" value="InterPro"/>
</dbReference>
<dbReference type="GO" id="GO:0019684">
    <property type="term" value="P:photosynthesis, light reaction"/>
    <property type="evidence" value="ECO:0007669"/>
    <property type="project" value="UniProtKB-UniRule"/>
</dbReference>
<dbReference type="HAMAP" id="MF_00445">
    <property type="entry name" value="NDH1_NuoN_1"/>
    <property type="match status" value="1"/>
</dbReference>
<dbReference type="InterPro" id="IPR010096">
    <property type="entry name" value="NADH-Q_OxRdtase_suN/2"/>
</dbReference>
<dbReference type="InterPro" id="IPR001750">
    <property type="entry name" value="ND/Mrp_TM"/>
</dbReference>
<dbReference type="InterPro" id="IPR045693">
    <property type="entry name" value="Ndh2_N"/>
</dbReference>
<dbReference type="NCBIfam" id="TIGR01770">
    <property type="entry name" value="NDH_I_N"/>
    <property type="match status" value="1"/>
</dbReference>
<dbReference type="NCBIfam" id="NF002701">
    <property type="entry name" value="PRK02504.1"/>
    <property type="match status" value="1"/>
</dbReference>
<dbReference type="PANTHER" id="PTHR22773">
    <property type="entry name" value="NADH DEHYDROGENASE"/>
    <property type="match status" value="1"/>
</dbReference>
<dbReference type="Pfam" id="PF19530">
    <property type="entry name" value="Ndh2_N"/>
    <property type="match status" value="1"/>
</dbReference>
<dbReference type="Pfam" id="PF00361">
    <property type="entry name" value="Proton_antipo_M"/>
    <property type="match status" value="1"/>
</dbReference>
<proteinExistence type="inferred from homology"/>
<comment type="function">
    <text evidence="1">NDH shuttles electrons from NAD(P)H:plastoquinone, via FMN and iron-sulfur (Fe-S) centers, to quinones in the photosynthetic chain and possibly in a chloroplast respiratory chain. The immediate electron acceptor for the enzyme in this species is believed to be plastoquinone. Couples the redox reaction to proton translocation, and thus conserves the redox energy in a proton gradient.</text>
</comment>
<comment type="catalytic activity">
    <reaction evidence="1">
        <text>a plastoquinone + NADH + (n+1) H(+)(in) = a plastoquinol + NAD(+) + n H(+)(out)</text>
        <dbReference type="Rhea" id="RHEA:42608"/>
        <dbReference type="Rhea" id="RHEA-COMP:9561"/>
        <dbReference type="Rhea" id="RHEA-COMP:9562"/>
        <dbReference type="ChEBI" id="CHEBI:15378"/>
        <dbReference type="ChEBI" id="CHEBI:17757"/>
        <dbReference type="ChEBI" id="CHEBI:57540"/>
        <dbReference type="ChEBI" id="CHEBI:57945"/>
        <dbReference type="ChEBI" id="CHEBI:62192"/>
    </reaction>
</comment>
<comment type="catalytic activity">
    <reaction evidence="1">
        <text>a plastoquinone + NADPH + (n+1) H(+)(in) = a plastoquinol + NADP(+) + n H(+)(out)</text>
        <dbReference type="Rhea" id="RHEA:42612"/>
        <dbReference type="Rhea" id="RHEA-COMP:9561"/>
        <dbReference type="Rhea" id="RHEA-COMP:9562"/>
        <dbReference type="ChEBI" id="CHEBI:15378"/>
        <dbReference type="ChEBI" id="CHEBI:17757"/>
        <dbReference type="ChEBI" id="CHEBI:57783"/>
        <dbReference type="ChEBI" id="CHEBI:58349"/>
        <dbReference type="ChEBI" id="CHEBI:62192"/>
    </reaction>
</comment>
<comment type="subunit">
    <text evidence="1">NDH is composed of at least 16 different subunits, 5 of which are encoded in the nucleus.</text>
</comment>
<comment type="subcellular location">
    <subcellularLocation>
        <location evidence="1">Plastid</location>
        <location evidence="1">Chloroplast thylakoid membrane</location>
        <topology evidence="1">Multi-pass membrane protein</topology>
    </subcellularLocation>
</comment>
<comment type="similarity">
    <text evidence="1">Belongs to the complex I subunit 2 family.</text>
</comment>
<comment type="sequence caution" evidence="2">
    <conflict type="erroneous termination">
        <sequence resource="EMBL-CDS" id="BAB33239"/>
    </conflict>
    <text>Truncated C-terminus.</text>
</comment>
<accession>P0CC88</accession>
<accession>Q9B149</accession>
<gene>
    <name evidence="1" type="primary">ndhB1</name>
</gene>
<organism>
    <name type="scientific">Lotus japonicus</name>
    <name type="common">Lotus corniculatus var. japonicus</name>
    <dbReference type="NCBI Taxonomy" id="34305"/>
    <lineage>
        <taxon>Eukaryota</taxon>
        <taxon>Viridiplantae</taxon>
        <taxon>Streptophyta</taxon>
        <taxon>Embryophyta</taxon>
        <taxon>Tracheophyta</taxon>
        <taxon>Spermatophyta</taxon>
        <taxon>Magnoliopsida</taxon>
        <taxon>eudicotyledons</taxon>
        <taxon>Gunneridae</taxon>
        <taxon>Pentapetalae</taxon>
        <taxon>rosids</taxon>
        <taxon>fabids</taxon>
        <taxon>Fabales</taxon>
        <taxon>Fabaceae</taxon>
        <taxon>Papilionoideae</taxon>
        <taxon>50 kb inversion clade</taxon>
        <taxon>NPAAA clade</taxon>
        <taxon>Hologalegina</taxon>
        <taxon>robinioid clade</taxon>
        <taxon>Loteae</taxon>
        <taxon>Lotus</taxon>
    </lineage>
</organism>
<keyword id="KW-0150">Chloroplast</keyword>
<keyword id="KW-0472">Membrane</keyword>
<keyword id="KW-0520">NAD</keyword>
<keyword id="KW-0521">NADP</keyword>
<keyword id="KW-0934">Plastid</keyword>
<keyword id="KW-0618">Plastoquinone</keyword>
<keyword id="KW-0874">Quinone</keyword>
<keyword id="KW-0793">Thylakoid</keyword>
<keyword id="KW-1278">Translocase</keyword>
<keyword id="KW-0812">Transmembrane</keyword>
<keyword id="KW-1133">Transmembrane helix</keyword>
<keyword id="KW-0813">Transport</keyword>
<evidence type="ECO:0000255" key="1">
    <source>
        <dbReference type="HAMAP-Rule" id="MF_00445"/>
    </source>
</evidence>
<evidence type="ECO:0000305" key="2"/>
<feature type="chain" id="PRO_0000117662" description="NAD(P)H-quinone oxidoreductase subunit 2 A, chloroplastic">
    <location>
        <begin position="1"/>
        <end position="510"/>
    </location>
</feature>
<feature type="transmembrane region" description="Helical" evidence="1">
    <location>
        <begin position="24"/>
        <end position="44"/>
    </location>
</feature>
<feature type="transmembrane region" description="Helical" evidence="1">
    <location>
        <begin position="57"/>
        <end position="77"/>
    </location>
</feature>
<feature type="transmembrane region" description="Helical" evidence="1">
    <location>
        <begin position="99"/>
        <end position="119"/>
    </location>
</feature>
<feature type="transmembrane region" description="Helical" evidence="1">
    <location>
        <begin position="124"/>
        <end position="144"/>
    </location>
</feature>
<feature type="transmembrane region" description="Helical" evidence="1">
    <location>
        <begin position="149"/>
        <end position="169"/>
    </location>
</feature>
<feature type="transmembrane region" description="Helical" evidence="1">
    <location>
        <begin position="183"/>
        <end position="203"/>
    </location>
</feature>
<feature type="transmembrane region" description="Helical" evidence="1">
    <location>
        <begin position="227"/>
        <end position="247"/>
    </location>
</feature>
<feature type="transmembrane region" description="Helical" evidence="1">
    <location>
        <begin position="295"/>
        <end position="315"/>
    </location>
</feature>
<feature type="transmembrane region" description="Helical" evidence="1">
    <location>
        <begin position="323"/>
        <end position="343"/>
    </location>
</feature>
<feature type="transmembrane region" description="Helical" evidence="1">
    <location>
        <begin position="354"/>
        <end position="374"/>
    </location>
</feature>
<feature type="transmembrane region" description="Helical" evidence="1">
    <location>
        <begin position="395"/>
        <end position="415"/>
    </location>
</feature>
<feature type="transmembrane region" description="Helical" evidence="1">
    <location>
        <begin position="418"/>
        <end position="438"/>
    </location>
</feature>
<feature type="transmembrane region" description="Helical" evidence="1">
    <location>
        <begin position="482"/>
        <end position="502"/>
    </location>
</feature>
<reference key="1">
    <citation type="journal article" date="2000" name="DNA Res.">
        <title>Complete structure of the chloroplast genome of a legume, Lotus japonicus.</title>
        <authorList>
            <person name="Kato T."/>
            <person name="Kaneko T."/>
            <person name="Sato S."/>
            <person name="Nakamura Y."/>
            <person name="Tabata S."/>
        </authorList>
    </citation>
    <scope>NUCLEOTIDE SEQUENCE [LARGE SCALE GENOMIC DNA]</scope>
    <source>
        <strain>cv. Miyakojima MG-20</strain>
    </source>
</reference>
<name>NU2C1_LOTJA</name>
<geneLocation type="chloroplast"/>